<organism>
    <name type="scientific">Corynebacterium urealyticum (strain ATCC 43042 / DSM 7109)</name>
    <dbReference type="NCBI Taxonomy" id="504474"/>
    <lineage>
        <taxon>Bacteria</taxon>
        <taxon>Bacillati</taxon>
        <taxon>Actinomycetota</taxon>
        <taxon>Actinomycetes</taxon>
        <taxon>Mycobacteriales</taxon>
        <taxon>Corynebacteriaceae</taxon>
        <taxon>Corynebacterium</taxon>
    </lineage>
</organism>
<proteinExistence type="inferred from homology"/>
<sequence>MNDISSQTPGILATAREQVLQRGEGLSQEQVLEVLNLPDEQIEELLALAHEVRVKWCGEEVEIEGIVSLKTGGCPEDCHFCSQSGLFETPVRSVWLDIPLLVEQAKQTAKTGATEFCIVAAVKGPDENLMRQLEVAVEAIRAEVDINVAASVGILTQEQVDRLTAIGVHRYNHNLETSRSNFPNVVTTHSWEERYETLKMVKESGMEVCCGGILGMGETREQRAEFAAELASLEPHEVPMNFLDPRPGTPFADYPVMAGSEALKTIGAFRLALPRTTLRFAGGRELTLEDFGTEAGLLGGINGMIVGNYLTTLGRDQEADVDMLNRLSLPIKALNRSV</sequence>
<keyword id="KW-0001">2Fe-2S</keyword>
<keyword id="KW-0004">4Fe-4S</keyword>
<keyword id="KW-0093">Biotin biosynthesis</keyword>
<keyword id="KW-0408">Iron</keyword>
<keyword id="KW-0411">Iron-sulfur</keyword>
<keyword id="KW-0479">Metal-binding</keyword>
<keyword id="KW-1185">Reference proteome</keyword>
<keyword id="KW-0949">S-adenosyl-L-methionine</keyword>
<keyword id="KW-0808">Transferase</keyword>
<comment type="function">
    <text evidence="1">Catalyzes the conversion of dethiobiotin (DTB) to biotin by the insertion of a sulfur atom into dethiobiotin via a radical-based mechanism.</text>
</comment>
<comment type="catalytic activity">
    <reaction evidence="1">
        <text>(4R,5S)-dethiobiotin + (sulfur carrier)-SH + 2 reduced [2Fe-2S]-[ferredoxin] + 2 S-adenosyl-L-methionine = (sulfur carrier)-H + biotin + 2 5'-deoxyadenosine + 2 L-methionine + 2 oxidized [2Fe-2S]-[ferredoxin]</text>
        <dbReference type="Rhea" id="RHEA:22060"/>
        <dbReference type="Rhea" id="RHEA-COMP:10000"/>
        <dbReference type="Rhea" id="RHEA-COMP:10001"/>
        <dbReference type="Rhea" id="RHEA-COMP:14737"/>
        <dbReference type="Rhea" id="RHEA-COMP:14739"/>
        <dbReference type="ChEBI" id="CHEBI:17319"/>
        <dbReference type="ChEBI" id="CHEBI:29917"/>
        <dbReference type="ChEBI" id="CHEBI:33737"/>
        <dbReference type="ChEBI" id="CHEBI:33738"/>
        <dbReference type="ChEBI" id="CHEBI:57586"/>
        <dbReference type="ChEBI" id="CHEBI:57844"/>
        <dbReference type="ChEBI" id="CHEBI:59789"/>
        <dbReference type="ChEBI" id="CHEBI:64428"/>
        <dbReference type="ChEBI" id="CHEBI:149473"/>
        <dbReference type="EC" id="2.8.1.6"/>
    </reaction>
</comment>
<comment type="cofactor">
    <cofactor evidence="1">
        <name>[4Fe-4S] cluster</name>
        <dbReference type="ChEBI" id="CHEBI:49883"/>
    </cofactor>
    <text evidence="1">Binds 1 [4Fe-4S] cluster. The cluster is coordinated with 3 cysteines and an exchangeable S-adenosyl-L-methionine.</text>
</comment>
<comment type="cofactor">
    <cofactor evidence="1">
        <name>[2Fe-2S] cluster</name>
        <dbReference type="ChEBI" id="CHEBI:190135"/>
    </cofactor>
    <text evidence="1">Binds 1 [2Fe-2S] cluster. The cluster is coordinated with 3 cysteines and 1 arginine.</text>
</comment>
<comment type="pathway">
    <text evidence="1">Cofactor biosynthesis; biotin biosynthesis; biotin from 7,8-diaminononanoate: step 2/2.</text>
</comment>
<comment type="subunit">
    <text evidence="1">Homodimer.</text>
</comment>
<comment type="similarity">
    <text evidence="1">Belongs to the radical SAM superfamily. Biotin synthase family.</text>
</comment>
<feature type="chain" id="PRO_0000381330" description="Biotin synthase">
    <location>
        <begin position="1"/>
        <end position="338"/>
    </location>
</feature>
<feature type="domain" description="Radical SAM core" evidence="2">
    <location>
        <begin position="59"/>
        <end position="284"/>
    </location>
</feature>
<feature type="binding site" evidence="1">
    <location>
        <position position="74"/>
    </location>
    <ligand>
        <name>[4Fe-4S] cluster</name>
        <dbReference type="ChEBI" id="CHEBI:49883"/>
        <note>4Fe-4S-S-AdoMet</note>
    </ligand>
</feature>
<feature type="binding site" evidence="1">
    <location>
        <position position="78"/>
    </location>
    <ligand>
        <name>[4Fe-4S] cluster</name>
        <dbReference type="ChEBI" id="CHEBI:49883"/>
        <note>4Fe-4S-S-AdoMet</note>
    </ligand>
</feature>
<feature type="binding site" evidence="1">
    <location>
        <position position="81"/>
    </location>
    <ligand>
        <name>[4Fe-4S] cluster</name>
        <dbReference type="ChEBI" id="CHEBI:49883"/>
        <note>4Fe-4S-S-AdoMet</note>
    </ligand>
</feature>
<feature type="binding site" evidence="1">
    <location>
        <position position="117"/>
    </location>
    <ligand>
        <name>[2Fe-2S] cluster</name>
        <dbReference type="ChEBI" id="CHEBI:190135"/>
    </ligand>
</feature>
<feature type="binding site" evidence="1">
    <location>
        <position position="209"/>
    </location>
    <ligand>
        <name>[2Fe-2S] cluster</name>
        <dbReference type="ChEBI" id="CHEBI:190135"/>
    </ligand>
</feature>
<feature type="binding site" evidence="1">
    <location>
        <position position="279"/>
    </location>
    <ligand>
        <name>[2Fe-2S] cluster</name>
        <dbReference type="ChEBI" id="CHEBI:190135"/>
    </ligand>
</feature>
<reference key="1">
    <citation type="journal article" date="2008" name="J. Biotechnol.">
        <title>The lifestyle of Corynebacterium urealyticum derived from its complete genome sequence established by pyrosequencing.</title>
        <authorList>
            <person name="Tauch A."/>
            <person name="Trost E."/>
            <person name="Tilker A."/>
            <person name="Ludewig U."/>
            <person name="Schneiker S."/>
            <person name="Goesmann A."/>
            <person name="Arnold W."/>
            <person name="Bekel T."/>
            <person name="Brinkrolf K."/>
            <person name="Brune I."/>
            <person name="Goetker S."/>
            <person name="Kalinowski J."/>
            <person name="Kamp P.-B."/>
            <person name="Lobo F.P."/>
            <person name="Viehoever P."/>
            <person name="Weisshaar B."/>
            <person name="Soriano F."/>
            <person name="Droege M."/>
            <person name="Puehler A."/>
        </authorList>
    </citation>
    <scope>NUCLEOTIDE SEQUENCE [LARGE SCALE GENOMIC DNA]</scope>
    <source>
        <strain>ATCC 43042 / DSM 7109</strain>
    </source>
</reference>
<protein>
    <recommendedName>
        <fullName evidence="1">Biotin synthase</fullName>
        <ecNumber evidence="1">2.8.1.6</ecNumber>
    </recommendedName>
</protein>
<accession>B1VF77</accession>
<dbReference type="EC" id="2.8.1.6" evidence="1"/>
<dbReference type="EMBL" id="AM942444">
    <property type="protein sequence ID" value="CAQ04416.1"/>
    <property type="molecule type" value="Genomic_DNA"/>
</dbReference>
<dbReference type="RefSeq" id="WP_012359709.1">
    <property type="nucleotide sequence ID" value="NC_010545.1"/>
</dbReference>
<dbReference type="SMR" id="B1VF77"/>
<dbReference type="STRING" id="504474.cu0456"/>
<dbReference type="GeneID" id="60605256"/>
<dbReference type="KEGG" id="cur:cu0456"/>
<dbReference type="eggNOG" id="COG0502">
    <property type="taxonomic scope" value="Bacteria"/>
</dbReference>
<dbReference type="HOGENOM" id="CLU_033172_2_1_11"/>
<dbReference type="UniPathway" id="UPA00078">
    <property type="reaction ID" value="UER00162"/>
</dbReference>
<dbReference type="Proteomes" id="UP000001727">
    <property type="component" value="Chromosome"/>
</dbReference>
<dbReference type="GO" id="GO:0051537">
    <property type="term" value="F:2 iron, 2 sulfur cluster binding"/>
    <property type="evidence" value="ECO:0007669"/>
    <property type="project" value="UniProtKB-KW"/>
</dbReference>
<dbReference type="GO" id="GO:0051539">
    <property type="term" value="F:4 iron, 4 sulfur cluster binding"/>
    <property type="evidence" value="ECO:0007669"/>
    <property type="project" value="UniProtKB-KW"/>
</dbReference>
<dbReference type="GO" id="GO:0004076">
    <property type="term" value="F:biotin synthase activity"/>
    <property type="evidence" value="ECO:0007669"/>
    <property type="project" value="UniProtKB-UniRule"/>
</dbReference>
<dbReference type="GO" id="GO:0005506">
    <property type="term" value="F:iron ion binding"/>
    <property type="evidence" value="ECO:0007669"/>
    <property type="project" value="UniProtKB-UniRule"/>
</dbReference>
<dbReference type="GO" id="GO:0009102">
    <property type="term" value="P:biotin biosynthetic process"/>
    <property type="evidence" value="ECO:0007669"/>
    <property type="project" value="UniProtKB-UniRule"/>
</dbReference>
<dbReference type="CDD" id="cd01335">
    <property type="entry name" value="Radical_SAM"/>
    <property type="match status" value="1"/>
</dbReference>
<dbReference type="FunFam" id="3.20.20.70:FF:000026">
    <property type="entry name" value="Biotin synthase"/>
    <property type="match status" value="1"/>
</dbReference>
<dbReference type="Gene3D" id="3.20.20.70">
    <property type="entry name" value="Aldolase class I"/>
    <property type="match status" value="1"/>
</dbReference>
<dbReference type="HAMAP" id="MF_01694">
    <property type="entry name" value="BioB"/>
    <property type="match status" value="1"/>
</dbReference>
<dbReference type="InterPro" id="IPR013785">
    <property type="entry name" value="Aldolase_TIM"/>
</dbReference>
<dbReference type="InterPro" id="IPR010722">
    <property type="entry name" value="BATS_dom"/>
</dbReference>
<dbReference type="InterPro" id="IPR002684">
    <property type="entry name" value="Biotin_synth/BioAB"/>
</dbReference>
<dbReference type="InterPro" id="IPR024177">
    <property type="entry name" value="Biotin_synthase"/>
</dbReference>
<dbReference type="InterPro" id="IPR006638">
    <property type="entry name" value="Elp3/MiaA/NifB-like_rSAM"/>
</dbReference>
<dbReference type="InterPro" id="IPR007197">
    <property type="entry name" value="rSAM"/>
</dbReference>
<dbReference type="NCBIfam" id="TIGR00433">
    <property type="entry name" value="bioB"/>
    <property type="match status" value="1"/>
</dbReference>
<dbReference type="PANTHER" id="PTHR22976">
    <property type="entry name" value="BIOTIN SYNTHASE"/>
    <property type="match status" value="1"/>
</dbReference>
<dbReference type="PANTHER" id="PTHR22976:SF2">
    <property type="entry name" value="BIOTIN SYNTHASE, MITOCHONDRIAL"/>
    <property type="match status" value="1"/>
</dbReference>
<dbReference type="Pfam" id="PF06968">
    <property type="entry name" value="BATS"/>
    <property type="match status" value="1"/>
</dbReference>
<dbReference type="Pfam" id="PF04055">
    <property type="entry name" value="Radical_SAM"/>
    <property type="match status" value="1"/>
</dbReference>
<dbReference type="PIRSF" id="PIRSF001619">
    <property type="entry name" value="Biotin_synth"/>
    <property type="match status" value="1"/>
</dbReference>
<dbReference type="SFLD" id="SFLDG01060">
    <property type="entry name" value="BATS_domain_containing"/>
    <property type="match status" value="1"/>
</dbReference>
<dbReference type="SFLD" id="SFLDG01278">
    <property type="entry name" value="biotin_synthase_like"/>
    <property type="match status" value="1"/>
</dbReference>
<dbReference type="SMART" id="SM00876">
    <property type="entry name" value="BATS"/>
    <property type="match status" value="1"/>
</dbReference>
<dbReference type="SMART" id="SM00729">
    <property type="entry name" value="Elp3"/>
    <property type="match status" value="1"/>
</dbReference>
<dbReference type="SUPFAM" id="SSF102114">
    <property type="entry name" value="Radical SAM enzymes"/>
    <property type="match status" value="1"/>
</dbReference>
<dbReference type="PROSITE" id="PS51918">
    <property type="entry name" value="RADICAL_SAM"/>
    <property type="match status" value="1"/>
</dbReference>
<gene>
    <name evidence="1" type="primary">bioB</name>
    <name type="ordered locus">cu0456</name>
</gene>
<evidence type="ECO:0000255" key="1">
    <source>
        <dbReference type="HAMAP-Rule" id="MF_01694"/>
    </source>
</evidence>
<evidence type="ECO:0000255" key="2">
    <source>
        <dbReference type="PROSITE-ProRule" id="PRU01266"/>
    </source>
</evidence>
<name>BIOB_CORU7</name>